<proteinExistence type="inferred from homology"/>
<gene>
    <name type="primary">RAG2</name>
</gene>
<protein>
    <recommendedName>
        <fullName>V(D)J recombination-activating protein 2</fullName>
        <shortName>RAG-2</shortName>
    </recommendedName>
</protein>
<name>RAG2_CHICK</name>
<feature type="chain" id="PRO_0000167140" description="V(D)J recombination-activating protein 2">
    <location>
        <begin position="1"/>
        <end position="528"/>
    </location>
</feature>
<feature type="zinc finger region" description="PHD-type; atypical">
    <location>
        <begin position="417"/>
        <end position="485"/>
    </location>
</feature>
<feature type="region of interest" description="Disordered" evidence="2">
    <location>
        <begin position="364"/>
        <end position="383"/>
    </location>
</feature>
<feature type="compositionally biased region" description="Acidic residues" evidence="2">
    <location>
        <begin position="373"/>
        <end position="383"/>
    </location>
</feature>
<feature type="binding site" evidence="1">
    <location>
        <position position="420"/>
    </location>
    <ligand>
        <name>Zn(2+)</name>
        <dbReference type="ChEBI" id="CHEBI:29105"/>
        <label>1</label>
    </ligand>
</feature>
<feature type="binding site" evidence="1">
    <location>
        <position position="424"/>
    </location>
    <ligand>
        <name>Zn(2+)</name>
        <dbReference type="ChEBI" id="CHEBI:29105"/>
        <label>1</label>
    </ligand>
</feature>
<feature type="binding site" evidence="1">
    <location>
        <position position="447"/>
    </location>
    <ligand>
        <name>Zn(2+)</name>
        <dbReference type="ChEBI" id="CHEBI:29105"/>
        <label>2</label>
    </ligand>
</feature>
<feature type="binding site" evidence="1">
    <location>
        <position position="453"/>
    </location>
    <ligand>
        <name>Zn(2+)</name>
        <dbReference type="ChEBI" id="CHEBI:29105"/>
        <label>2</label>
    </ligand>
</feature>
<feature type="binding site" evidence="1">
    <location>
        <position position="456"/>
    </location>
    <ligand>
        <name>Zn(2+)</name>
        <dbReference type="ChEBI" id="CHEBI:29105"/>
        <label>1</label>
    </ligand>
</feature>
<feature type="binding site" evidence="1">
    <location>
        <position position="459"/>
    </location>
    <ligand>
        <name>Zn(2+)</name>
        <dbReference type="ChEBI" id="CHEBI:29105"/>
        <label>1</label>
    </ligand>
</feature>
<feature type="binding site" evidence="1">
    <location>
        <position position="479"/>
    </location>
    <ligand>
        <name>Zn(2+)</name>
        <dbReference type="ChEBI" id="CHEBI:29105"/>
        <label>2</label>
    </ligand>
</feature>
<feature type="binding site" evidence="1">
    <location>
        <position position="482"/>
    </location>
    <ligand>
        <name>Zn(2+)</name>
        <dbReference type="ChEBI" id="CHEBI:29105"/>
        <label>2</label>
    </ligand>
</feature>
<organism>
    <name type="scientific">Gallus gallus</name>
    <name type="common">Chicken</name>
    <dbReference type="NCBI Taxonomy" id="9031"/>
    <lineage>
        <taxon>Eukaryota</taxon>
        <taxon>Metazoa</taxon>
        <taxon>Chordata</taxon>
        <taxon>Craniata</taxon>
        <taxon>Vertebrata</taxon>
        <taxon>Euteleostomi</taxon>
        <taxon>Archelosauria</taxon>
        <taxon>Archosauria</taxon>
        <taxon>Dinosauria</taxon>
        <taxon>Saurischia</taxon>
        <taxon>Theropoda</taxon>
        <taxon>Coelurosauria</taxon>
        <taxon>Aves</taxon>
        <taxon>Neognathae</taxon>
        <taxon>Galloanserae</taxon>
        <taxon>Galliformes</taxon>
        <taxon>Phasianidae</taxon>
        <taxon>Phasianinae</taxon>
        <taxon>Gallus</taxon>
    </lineage>
</organism>
<reference key="1">
    <citation type="journal article" date="1991" name="Cell">
        <title>Selective expression of RAG-2 in chicken B cells undergoing immunoglobulin gene conversion.</title>
        <authorList>
            <person name="Carlson L.M."/>
            <person name="Oettinger M.A."/>
            <person name="Schatz D.G."/>
            <person name="Masteller E.L."/>
            <person name="Hurley E.A."/>
            <person name="McCormack W.I."/>
            <person name="Baltimore D."/>
            <person name="Thompson C.B."/>
        </authorList>
    </citation>
    <scope>NUCLEOTIDE SEQUENCE [GENOMIC DNA]</scope>
</reference>
<evidence type="ECO:0000250" key="1"/>
<evidence type="ECO:0000256" key="2">
    <source>
        <dbReference type="SAM" id="MobiDB-lite"/>
    </source>
</evidence>
<evidence type="ECO:0000305" key="3"/>
<keyword id="KW-0156">Chromatin regulator</keyword>
<keyword id="KW-0233">DNA recombination</keyword>
<keyword id="KW-0479">Metal-binding</keyword>
<keyword id="KW-0539">Nucleus</keyword>
<keyword id="KW-1185">Reference proteome</keyword>
<keyword id="KW-0862">Zinc</keyword>
<keyword id="KW-0863">Zinc-finger</keyword>
<comment type="function">
    <text evidence="1">Core component of the RAG complex, a multiprotein complex that mediates the DNA cleavage phase during V(D)J recombination. V(D)J recombination assembles a diverse repertoire of immunoglobulin and T-cell receptor genes in developing B and T lymphocytes through rearrangement of different V (variable), in some cases D (diversity), and J (joining) gene segments. DNA cleavage by the RAG complex occurs in 2 steps: a first nick is introduced in the top strand immediately upstream of the heptamer, generating a 3'-hydroxyl group that can attack the phosphodiester bond on the opposite strand in a direct transesterification reaction, thereby creating 4 DNA ends: 2 hairpin coding ends and 2 blunt, 5'-phosphorylated ends. In the RAG complex, RAG2 is not the catalytic component but is required for all known catalytic activities mediated by RAG1. It probably acts as a sensor of chromatin state that recruits the RAG complex to H3K4me3 (By similarity).</text>
</comment>
<comment type="subunit">
    <text evidence="1">Component of the RAG complex composed of core components RAG1 and RAG2.</text>
</comment>
<comment type="subcellular location">
    <subcellularLocation>
        <location evidence="1">Nucleus</location>
    </subcellularLocation>
</comment>
<comment type="domain">
    <text evidence="1">The atypical PHD-type zinc finger recognizes and binds histone H3 trimethylated on 'Lys-4' (H3K4me3). The atypical PHD-type zinc finger also binds various phosphoinositides (By similarity).</text>
</comment>
<comment type="similarity">
    <text evidence="3">Belongs to the RAG2 family.</text>
</comment>
<sequence length="528" mass="59089">MSLQMVSAVSNSSLLQPGSSLLNFDGHVFFFGQKGWPKRSCPTGVFFLDIKQNELKMKPAAFSRDSCYLPPLRYPAICTLRGNGESDKHQYIIHGGKTPNNDLSDKIYIMSMVNKTTKKTTFQCIEKDLGGDVPEARYGHTINVVHSRGKSMIVIFGGRSYIPLAQRTTEKWNSVVDCLPSVFLVDFEFGCCTSYILPELQDGLSFHVSVARDDTIYILGGHSLQNNTRPPSLYKLKVDLPLGSPCVTCSILPGGISVSSGIVTQTGDTEFVLVGGYQSDNQKRMICNTIVLEDNKIEIVERVSPDWTPDIKHCRMWFGCDMGKGSVLLGIPGANKQLISDANYFYILRCNKAEEDEEEELTAQTCSQASTEDQGDSTPFEDSEEFSFSAEASSFDVDDIDTYNEDDEEDESETGYWIICCASCNIDINTWVPFYSTELNKPAMILCSSGSGHWVHAQCMDLSESMLLQLSEANVKYFCNEHVHLNKGLQTPKKAVHLKKQPMKRLHKKKTMKLTTPVKKSFLRRLFE</sequence>
<dbReference type="EMBL" id="M58531">
    <property type="protein sequence ID" value="AAA49052.1"/>
    <property type="molecule type" value="Genomic_DNA"/>
</dbReference>
<dbReference type="PIR" id="S42510">
    <property type="entry name" value="S42510"/>
</dbReference>
<dbReference type="SMR" id="P25022"/>
<dbReference type="FunCoup" id="P25022">
    <property type="interactions" value="2"/>
</dbReference>
<dbReference type="STRING" id="9031.ENSGALP00000059818"/>
<dbReference type="PaxDb" id="9031-ENSGALP00000012883"/>
<dbReference type="VEuPathDB" id="HostDB:geneid_423165"/>
<dbReference type="eggNOG" id="ENOG502QVKU">
    <property type="taxonomic scope" value="Eukaryota"/>
</dbReference>
<dbReference type="HOGENOM" id="CLU_516740_0_0_1"/>
<dbReference type="InParanoid" id="P25022"/>
<dbReference type="OrthoDB" id="8512570at2759"/>
<dbReference type="PhylomeDB" id="P25022"/>
<dbReference type="TreeFam" id="TF331236"/>
<dbReference type="Proteomes" id="UP000000539">
    <property type="component" value="Unassembled WGS sequence"/>
</dbReference>
<dbReference type="GO" id="GO:0097519">
    <property type="term" value="C:DNA recombinase complex"/>
    <property type="evidence" value="ECO:0000318"/>
    <property type="project" value="GO_Central"/>
</dbReference>
<dbReference type="GO" id="GO:0005634">
    <property type="term" value="C:nucleus"/>
    <property type="evidence" value="ECO:0007669"/>
    <property type="project" value="UniProtKB-SubCell"/>
</dbReference>
<dbReference type="GO" id="GO:0003682">
    <property type="term" value="F:chromatin binding"/>
    <property type="evidence" value="ECO:0000250"/>
    <property type="project" value="UniProtKB"/>
</dbReference>
<dbReference type="GO" id="GO:0140002">
    <property type="term" value="F:histone H3K4me3 reader activity"/>
    <property type="evidence" value="ECO:0000250"/>
    <property type="project" value="UniProtKB"/>
</dbReference>
<dbReference type="GO" id="GO:0035091">
    <property type="term" value="F:phosphatidylinositol binding"/>
    <property type="evidence" value="ECO:0000250"/>
    <property type="project" value="UniProtKB"/>
</dbReference>
<dbReference type="GO" id="GO:0005547">
    <property type="term" value="F:phosphatidylinositol-3,4,5-trisphosphate binding"/>
    <property type="evidence" value="ECO:0000250"/>
    <property type="project" value="UniProtKB"/>
</dbReference>
<dbReference type="GO" id="GO:0043325">
    <property type="term" value="F:phosphatidylinositol-3,4-bisphosphate binding"/>
    <property type="evidence" value="ECO:0000250"/>
    <property type="project" value="UniProtKB"/>
</dbReference>
<dbReference type="GO" id="GO:0080025">
    <property type="term" value="F:phosphatidylinositol-3,5-bisphosphate binding"/>
    <property type="evidence" value="ECO:0000250"/>
    <property type="project" value="UniProtKB"/>
</dbReference>
<dbReference type="GO" id="GO:0005546">
    <property type="term" value="F:phosphatidylinositol-4,5-bisphosphate binding"/>
    <property type="evidence" value="ECO:0000250"/>
    <property type="project" value="UniProtKB"/>
</dbReference>
<dbReference type="GO" id="GO:0043565">
    <property type="term" value="F:sequence-specific DNA binding"/>
    <property type="evidence" value="ECO:0000318"/>
    <property type="project" value="GO_Central"/>
</dbReference>
<dbReference type="GO" id="GO:0008270">
    <property type="term" value="F:zinc ion binding"/>
    <property type="evidence" value="ECO:0000250"/>
    <property type="project" value="UniProtKB"/>
</dbReference>
<dbReference type="GO" id="GO:0030183">
    <property type="term" value="P:B cell differentiation"/>
    <property type="evidence" value="ECO:0000250"/>
    <property type="project" value="UniProtKB"/>
</dbReference>
<dbReference type="GO" id="GO:0033077">
    <property type="term" value="P:T cell differentiation in thymus"/>
    <property type="evidence" value="ECO:0000250"/>
    <property type="project" value="UniProtKB"/>
</dbReference>
<dbReference type="GO" id="GO:0033151">
    <property type="term" value="P:V(D)J recombination"/>
    <property type="evidence" value="ECO:0000250"/>
    <property type="project" value="UniProtKB"/>
</dbReference>
<dbReference type="CDD" id="cd15569">
    <property type="entry name" value="PHD_RAG2"/>
    <property type="match status" value="1"/>
</dbReference>
<dbReference type="FunFam" id="2.120.10.80:FF:000047">
    <property type="entry name" value="V(D)J recombination-activating protein 2"/>
    <property type="match status" value="1"/>
</dbReference>
<dbReference type="Gene3D" id="2.120.10.80">
    <property type="entry name" value="Kelch-type beta propeller"/>
    <property type="match status" value="1"/>
</dbReference>
<dbReference type="Gene3D" id="3.30.160.290">
    <property type="entry name" value="Rag2 PHD finger"/>
    <property type="match status" value="1"/>
</dbReference>
<dbReference type="InterPro" id="IPR011043">
    <property type="entry name" value="Gal_Oxase/kelch_b-propeller"/>
</dbReference>
<dbReference type="InterPro" id="IPR015915">
    <property type="entry name" value="Kelch-typ_b-propeller"/>
</dbReference>
<dbReference type="InterPro" id="IPR004321">
    <property type="entry name" value="RAG2"/>
</dbReference>
<dbReference type="InterPro" id="IPR025162">
    <property type="entry name" value="RAG2_PHD"/>
</dbReference>
<dbReference type="InterPro" id="IPR011011">
    <property type="entry name" value="Znf_FYVE_PHD"/>
</dbReference>
<dbReference type="PANTHER" id="PTHR10960">
    <property type="entry name" value="V D J RECOMBINATION-ACTIVATING PROTEIN 2"/>
    <property type="match status" value="1"/>
</dbReference>
<dbReference type="PANTHER" id="PTHR10960:SF0">
    <property type="entry name" value="V(D)J RECOMBINATION-ACTIVATING PROTEIN 2"/>
    <property type="match status" value="1"/>
</dbReference>
<dbReference type="Pfam" id="PF03089">
    <property type="entry name" value="RAG2"/>
    <property type="match status" value="1"/>
</dbReference>
<dbReference type="Pfam" id="PF13341">
    <property type="entry name" value="RAG2_PHD"/>
    <property type="match status" value="1"/>
</dbReference>
<dbReference type="SUPFAM" id="SSF57903">
    <property type="entry name" value="FYVE/PHD zinc finger"/>
    <property type="match status" value="1"/>
</dbReference>
<dbReference type="SUPFAM" id="SSF50965">
    <property type="entry name" value="Galactose oxidase, central domain"/>
    <property type="match status" value="1"/>
</dbReference>
<accession>P25022</accession>